<proteinExistence type="inferred from homology"/>
<gene>
    <name evidence="1" type="primary">folD</name>
    <name type="ordered locus">GK2396</name>
    <name type="ORF">GKC01</name>
</gene>
<reference key="1">
    <citation type="journal article" date="2004" name="Extremophiles">
        <title>Genomic characterization of thermophilic Geobacillus species isolated from the deepest sea mud of the Mariana Trench.</title>
        <authorList>
            <person name="Takami H."/>
            <person name="Nishi S."/>
            <person name="Lu J."/>
            <person name="Shimamura S."/>
            <person name="Takaki Y."/>
        </authorList>
    </citation>
    <scope>NUCLEOTIDE SEQUENCE [GENOMIC DNA]</scope>
    <source>
        <strain>HTA426</strain>
    </source>
</reference>
<reference key="2">
    <citation type="journal article" date="2004" name="Nucleic Acids Res.">
        <title>Thermoadaptation trait revealed by the genome sequence of thermophilic Geobacillus kaustophilus.</title>
        <authorList>
            <person name="Takami H."/>
            <person name="Takaki Y."/>
            <person name="Chee G.-J."/>
            <person name="Nishi S."/>
            <person name="Shimamura S."/>
            <person name="Suzuki H."/>
            <person name="Matsui S."/>
            <person name="Uchiyama I."/>
        </authorList>
    </citation>
    <scope>NUCLEOTIDE SEQUENCE [LARGE SCALE GENOMIC DNA]</scope>
    <source>
        <strain>HTA426</strain>
    </source>
</reference>
<feature type="chain" id="PRO_0000268357" description="Bifunctional protein FolD">
    <location>
        <begin position="1"/>
        <end position="284"/>
    </location>
</feature>
<feature type="binding site" evidence="1">
    <location>
        <begin position="165"/>
        <end position="167"/>
    </location>
    <ligand>
        <name>NADP(+)</name>
        <dbReference type="ChEBI" id="CHEBI:58349"/>
    </ligand>
</feature>
<feature type="binding site" evidence="1">
    <location>
        <position position="190"/>
    </location>
    <ligand>
        <name>NADP(+)</name>
        <dbReference type="ChEBI" id="CHEBI:58349"/>
    </ligand>
</feature>
<feature type="binding site" evidence="1">
    <location>
        <position position="231"/>
    </location>
    <ligand>
        <name>NADP(+)</name>
        <dbReference type="ChEBI" id="CHEBI:58349"/>
    </ligand>
</feature>
<keyword id="KW-0028">Amino-acid biosynthesis</keyword>
<keyword id="KW-0368">Histidine biosynthesis</keyword>
<keyword id="KW-0378">Hydrolase</keyword>
<keyword id="KW-0486">Methionine biosynthesis</keyword>
<keyword id="KW-0511">Multifunctional enzyme</keyword>
<keyword id="KW-0521">NADP</keyword>
<keyword id="KW-0554">One-carbon metabolism</keyword>
<keyword id="KW-0560">Oxidoreductase</keyword>
<keyword id="KW-0658">Purine biosynthesis</keyword>
<keyword id="KW-1185">Reference proteome</keyword>
<dbReference type="EC" id="1.5.1.5" evidence="1"/>
<dbReference type="EC" id="3.5.4.9" evidence="1"/>
<dbReference type="EMBL" id="AB126620">
    <property type="protein sequence ID" value="BAD18357.1"/>
    <property type="molecule type" value="Genomic_DNA"/>
</dbReference>
<dbReference type="EMBL" id="BA000043">
    <property type="protein sequence ID" value="BAD76681.1"/>
    <property type="molecule type" value="Genomic_DNA"/>
</dbReference>
<dbReference type="RefSeq" id="WP_011231878.1">
    <property type="nucleotide sequence ID" value="NC_006510.1"/>
</dbReference>
<dbReference type="SMR" id="Q75TC1"/>
<dbReference type="STRING" id="235909.GK2396"/>
<dbReference type="GeneID" id="32064281"/>
<dbReference type="KEGG" id="gka:GK2396"/>
<dbReference type="eggNOG" id="COG0190">
    <property type="taxonomic scope" value="Bacteria"/>
</dbReference>
<dbReference type="HOGENOM" id="CLU_034045_2_1_9"/>
<dbReference type="UniPathway" id="UPA00193"/>
<dbReference type="Proteomes" id="UP000001172">
    <property type="component" value="Chromosome"/>
</dbReference>
<dbReference type="GO" id="GO:0005829">
    <property type="term" value="C:cytosol"/>
    <property type="evidence" value="ECO:0007669"/>
    <property type="project" value="TreeGrafter"/>
</dbReference>
<dbReference type="GO" id="GO:0004477">
    <property type="term" value="F:methenyltetrahydrofolate cyclohydrolase activity"/>
    <property type="evidence" value="ECO:0007669"/>
    <property type="project" value="UniProtKB-UniRule"/>
</dbReference>
<dbReference type="GO" id="GO:0004488">
    <property type="term" value="F:methylenetetrahydrofolate dehydrogenase (NADP+) activity"/>
    <property type="evidence" value="ECO:0007669"/>
    <property type="project" value="UniProtKB-UniRule"/>
</dbReference>
<dbReference type="GO" id="GO:0000105">
    <property type="term" value="P:L-histidine biosynthetic process"/>
    <property type="evidence" value="ECO:0007669"/>
    <property type="project" value="UniProtKB-KW"/>
</dbReference>
<dbReference type="GO" id="GO:0009086">
    <property type="term" value="P:methionine biosynthetic process"/>
    <property type="evidence" value="ECO:0007669"/>
    <property type="project" value="UniProtKB-KW"/>
</dbReference>
<dbReference type="GO" id="GO:0006164">
    <property type="term" value="P:purine nucleotide biosynthetic process"/>
    <property type="evidence" value="ECO:0007669"/>
    <property type="project" value="UniProtKB-KW"/>
</dbReference>
<dbReference type="GO" id="GO:0035999">
    <property type="term" value="P:tetrahydrofolate interconversion"/>
    <property type="evidence" value="ECO:0007669"/>
    <property type="project" value="UniProtKB-UniRule"/>
</dbReference>
<dbReference type="CDD" id="cd01080">
    <property type="entry name" value="NAD_bind_m-THF_DH_Cyclohyd"/>
    <property type="match status" value="1"/>
</dbReference>
<dbReference type="FunFam" id="3.40.50.10860:FF:000001">
    <property type="entry name" value="Bifunctional protein FolD"/>
    <property type="match status" value="1"/>
</dbReference>
<dbReference type="FunFam" id="3.40.50.720:FF:000094">
    <property type="entry name" value="Bifunctional protein FolD"/>
    <property type="match status" value="1"/>
</dbReference>
<dbReference type="Gene3D" id="3.40.50.10860">
    <property type="entry name" value="Leucine Dehydrogenase, chain A, domain 1"/>
    <property type="match status" value="1"/>
</dbReference>
<dbReference type="Gene3D" id="3.40.50.720">
    <property type="entry name" value="NAD(P)-binding Rossmann-like Domain"/>
    <property type="match status" value="1"/>
</dbReference>
<dbReference type="HAMAP" id="MF_01576">
    <property type="entry name" value="THF_DHG_CYH"/>
    <property type="match status" value="1"/>
</dbReference>
<dbReference type="InterPro" id="IPR046346">
    <property type="entry name" value="Aminoacid_DH-like_N_sf"/>
</dbReference>
<dbReference type="InterPro" id="IPR036291">
    <property type="entry name" value="NAD(P)-bd_dom_sf"/>
</dbReference>
<dbReference type="InterPro" id="IPR000672">
    <property type="entry name" value="THF_DH/CycHdrlase"/>
</dbReference>
<dbReference type="InterPro" id="IPR020630">
    <property type="entry name" value="THF_DH/CycHdrlase_cat_dom"/>
</dbReference>
<dbReference type="InterPro" id="IPR020867">
    <property type="entry name" value="THF_DH/CycHdrlase_CS"/>
</dbReference>
<dbReference type="InterPro" id="IPR020631">
    <property type="entry name" value="THF_DH/CycHdrlase_NAD-bd_dom"/>
</dbReference>
<dbReference type="NCBIfam" id="NF008058">
    <property type="entry name" value="PRK10792.1"/>
    <property type="match status" value="1"/>
</dbReference>
<dbReference type="NCBIfam" id="NF010783">
    <property type="entry name" value="PRK14186.1"/>
    <property type="match status" value="1"/>
</dbReference>
<dbReference type="NCBIfam" id="NF010786">
    <property type="entry name" value="PRK14189.1"/>
    <property type="match status" value="1"/>
</dbReference>
<dbReference type="PANTHER" id="PTHR48099:SF5">
    <property type="entry name" value="C-1-TETRAHYDROFOLATE SYNTHASE, CYTOPLASMIC"/>
    <property type="match status" value="1"/>
</dbReference>
<dbReference type="PANTHER" id="PTHR48099">
    <property type="entry name" value="C-1-TETRAHYDROFOLATE SYNTHASE, CYTOPLASMIC-RELATED"/>
    <property type="match status" value="1"/>
</dbReference>
<dbReference type="Pfam" id="PF00763">
    <property type="entry name" value="THF_DHG_CYH"/>
    <property type="match status" value="1"/>
</dbReference>
<dbReference type="Pfam" id="PF02882">
    <property type="entry name" value="THF_DHG_CYH_C"/>
    <property type="match status" value="1"/>
</dbReference>
<dbReference type="PRINTS" id="PR00085">
    <property type="entry name" value="THFDHDRGNASE"/>
</dbReference>
<dbReference type="SUPFAM" id="SSF53223">
    <property type="entry name" value="Aminoacid dehydrogenase-like, N-terminal domain"/>
    <property type="match status" value="1"/>
</dbReference>
<dbReference type="SUPFAM" id="SSF51735">
    <property type="entry name" value="NAD(P)-binding Rossmann-fold domains"/>
    <property type="match status" value="1"/>
</dbReference>
<dbReference type="PROSITE" id="PS00767">
    <property type="entry name" value="THF_DHG_CYH_2"/>
    <property type="match status" value="1"/>
</dbReference>
<sequence>MTAQIISGTEMARTIRTALADEAAQLKADGVEPGLAVILVGDDPASHSYVKGKQKACAEVGIRSFLYTFPAAIDEETLLAKIRELNVDPAVHGILVQLPLPDHICEWSVIETIAPEKDVDGFHPINVGKMMIGQRAFLPCTPHGILVMVQSAGIDIAGKHVVVVGRSNIVGKPVGQLFLREHATVTYTHSKTPDLAAITRQADILIVAVGKARLIGPEHIKPGAVVIDVGVNRLENGKLCGDVDFDAVKEVAGYITPVPGGVGPMTITMLLHNTIEAARQLAAK</sequence>
<organism>
    <name type="scientific">Geobacillus kaustophilus (strain HTA426)</name>
    <dbReference type="NCBI Taxonomy" id="235909"/>
    <lineage>
        <taxon>Bacteria</taxon>
        <taxon>Bacillati</taxon>
        <taxon>Bacillota</taxon>
        <taxon>Bacilli</taxon>
        <taxon>Bacillales</taxon>
        <taxon>Anoxybacillaceae</taxon>
        <taxon>Geobacillus</taxon>
        <taxon>Geobacillus thermoleovorans group</taxon>
    </lineage>
</organism>
<accession>Q75TC1</accession>
<accession>Q5KXA5</accession>
<evidence type="ECO:0000255" key="1">
    <source>
        <dbReference type="HAMAP-Rule" id="MF_01576"/>
    </source>
</evidence>
<comment type="function">
    <text evidence="1">Catalyzes the oxidation of 5,10-methylenetetrahydrofolate to 5,10-methenyltetrahydrofolate and then the hydrolysis of 5,10-methenyltetrahydrofolate to 10-formyltetrahydrofolate.</text>
</comment>
<comment type="catalytic activity">
    <reaction evidence="1">
        <text>(6R)-5,10-methylene-5,6,7,8-tetrahydrofolate + NADP(+) = (6R)-5,10-methenyltetrahydrofolate + NADPH</text>
        <dbReference type="Rhea" id="RHEA:22812"/>
        <dbReference type="ChEBI" id="CHEBI:15636"/>
        <dbReference type="ChEBI" id="CHEBI:57455"/>
        <dbReference type="ChEBI" id="CHEBI:57783"/>
        <dbReference type="ChEBI" id="CHEBI:58349"/>
        <dbReference type="EC" id="1.5.1.5"/>
    </reaction>
</comment>
<comment type="catalytic activity">
    <reaction evidence="1">
        <text>(6R)-5,10-methenyltetrahydrofolate + H2O = (6R)-10-formyltetrahydrofolate + H(+)</text>
        <dbReference type="Rhea" id="RHEA:23700"/>
        <dbReference type="ChEBI" id="CHEBI:15377"/>
        <dbReference type="ChEBI" id="CHEBI:15378"/>
        <dbReference type="ChEBI" id="CHEBI:57455"/>
        <dbReference type="ChEBI" id="CHEBI:195366"/>
        <dbReference type="EC" id="3.5.4.9"/>
    </reaction>
</comment>
<comment type="pathway">
    <text evidence="1">One-carbon metabolism; tetrahydrofolate interconversion.</text>
</comment>
<comment type="subunit">
    <text evidence="1">Homodimer.</text>
</comment>
<comment type="similarity">
    <text evidence="1">Belongs to the tetrahydrofolate dehydrogenase/cyclohydrolase family.</text>
</comment>
<protein>
    <recommendedName>
        <fullName evidence="1">Bifunctional protein FolD</fullName>
    </recommendedName>
    <domain>
        <recommendedName>
            <fullName evidence="1">Methylenetetrahydrofolate dehydrogenase</fullName>
            <ecNumber evidence="1">1.5.1.5</ecNumber>
        </recommendedName>
    </domain>
    <domain>
        <recommendedName>
            <fullName evidence="1">Methenyltetrahydrofolate cyclohydrolase</fullName>
            <ecNumber evidence="1">3.5.4.9</ecNumber>
        </recommendedName>
    </domain>
</protein>
<name>FOLD_GEOKA</name>